<feature type="chain" id="PRO_1000081374" description="UPF0178 protein BSUIS_A1819">
    <location>
        <begin position="1"/>
        <end position="161"/>
    </location>
</feature>
<protein>
    <recommendedName>
        <fullName evidence="1">UPF0178 protein BSUIS_A1819</fullName>
    </recommendedName>
</protein>
<comment type="similarity">
    <text evidence="1">Belongs to the UPF0178 family.</text>
</comment>
<reference key="1">
    <citation type="submission" date="2007-12" db="EMBL/GenBank/DDBJ databases">
        <title>Brucella suis ATCC 23445 whole genome shotgun sequencing project.</title>
        <authorList>
            <person name="Setubal J.C."/>
            <person name="Bowns C."/>
            <person name="Boyle S."/>
            <person name="Crasta O.R."/>
            <person name="Czar M.J."/>
            <person name="Dharmanolla C."/>
            <person name="Gillespie J.J."/>
            <person name="Kenyon R.W."/>
            <person name="Lu J."/>
            <person name="Mane S."/>
            <person name="Mohapatra S."/>
            <person name="Nagrani S."/>
            <person name="Purkayastha A."/>
            <person name="Rajasimha H.K."/>
            <person name="Shallom J.M."/>
            <person name="Shallom S."/>
            <person name="Shukla M."/>
            <person name="Snyder E.E."/>
            <person name="Sobral B.W."/>
            <person name="Wattam A.R."/>
            <person name="Will R."/>
            <person name="Williams K."/>
            <person name="Yoo H."/>
            <person name="Bruce D."/>
            <person name="Detter C."/>
            <person name="Munk C."/>
            <person name="Brettin T.S."/>
        </authorList>
    </citation>
    <scope>NUCLEOTIDE SEQUENCE [LARGE SCALE GENOMIC DNA]</scope>
    <source>
        <strain>ATCC 23445 / NCTC 10510</strain>
    </source>
</reference>
<sequence>MENEPDTICILVDADACPVKAEIYRVAERHNLPVVIVANSFIAIPREAQRVERVVVSGNLDAADDWIAEHSRPGAVVVTADIPLASRALEKGASVIAPNGRIHTQSTIGNTLAARNLMDSLRSAGEVTGGPAPFAPKDRSAFLSALDLAIVRLKRAGFHAS</sequence>
<dbReference type="EMBL" id="CP000911">
    <property type="protein sequence ID" value="ABY38835.1"/>
    <property type="molecule type" value="Genomic_DNA"/>
</dbReference>
<dbReference type="RefSeq" id="WP_006071690.1">
    <property type="nucleotide sequence ID" value="NC_010169.1"/>
</dbReference>
<dbReference type="KEGG" id="bmt:BSUIS_A1819"/>
<dbReference type="HOGENOM" id="CLU_106619_2_1_5"/>
<dbReference type="Proteomes" id="UP000008545">
    <property type="component" value="Chromosome I"/>
</dbReference>
<dbReference type="CDD" id="cd18720">
    <property type="entry name" value="PIN_YqxD-like"/>
    <property type="match status" value="1"/>
</dbReference>
<dbReference type="HAMAP" id="MF_00489">
    <property type="entry name" value="UPF0178"/>
    <property type="match status" value="1"/>
</dbReference>
<dbReference type="InterPro" id="IPR003791">
    <property type="entry name" value="UPF0178"/>
</dbReference>
<dbReference type="NCBIfam" id="NF001095">
    <property type="entry name" value="PRK00124.1"/>
    <property type="match status" value="1"/>
</dbReference>
<dbReference type="PANTHER" id="PTHR35146">
    <property type="entry name" value="UPF0178 PROTEIN YAII"/>
    <property type="match status" value="1"/>
</dbReference>
<dbReference type="PANTHER" id="PTHR35146:SF1">
    <property type="entry name" value="UPF0178 PROTEIN YAII"/>
    <property type="match status" value="1"/>
</dbReference>
<dbReference type="Pfam" id="PF02639">
    <property type="entry name" value="DUF188"/>
    <property type="match status" value="1"/>
</dbReference>
<accession>B0CIY2</accession>
<proteinExistence type="inferred from homology"/>
<name>Y1819_BRUSI</name>
<organism>
    <name type="scientific">Brucella suis (strain ATCC 23445 / NCTC 10510)</name>
    <dbReference type="NCBI Taxonomy" id="470137"/>
    <lineage>
        <taxon>Bacteria</taxon>
        <taxon>Pseudomonadati</taxon>
        <taxon>Pseudomonadota</taxon>
        <taxon>Alphaproteobacteria</taxon>
        <taxon>Hyphomicrobiales</taxon>
        <taxon>Brucellaceae</taxon>
        <taxon>Brucella/Ochrobactrum group</taxon>
        <taxon>Brucella</taxon>
    </lineage>
</organism>
<evidence type="ECO:0000255" key="1">
    <source>
        <dbReference type="HAMAP-Rule" id="MF_00489"/>
    </source>
</evidence>
<gene>
    <name type="ordered locus">BSUIS_A1819</name>
</gene>